<feature type="signal peptide" evidence="2">
    <location>
        <begin position="1"/>
        <end position="24"/>
    </location>
</feature>
<feature type="chain" id="PRO_0000033305" description="Stanniocalcin-2">
    <location>
        <begin position="25"/>
        <end position="296"/>
    </location>
</feature>
<feature type="region of interest" description="Disordered" evidence="3">
    <location>
        <begin position="21"/>
        <end position="44"/>
    </location>
</feature>
<feature type="region of interest" description="Disordered" evidence="3">
    <location>
        <begin position="218"/>
        <end position="296"/>
    </location>
</feature>
<feature type="compositionally biased region" description="Polar residues" evidence="3">
    <location>
        <begin position="24"/>
        <end position="44"/>
    </location>
</feature>
<feature type="compositionally biased region" description="Basic and acidic residues" evidence="3">
    <location>
        <begin position="240"/>
        <end position="258"/>
    </location>
</feature>
<feature type="compositionally biased region" description="Low complexity" evidence="3">
    <location>
        <begin position="272"/>
        <end position="282"/>
    </location>
</feature>
<feature type="glycosylation site" description="N-linked (GlcNAc...) asparagine" evidence="2">
    <location>
        <position position="73"/>
    </location>
</feature>
<reference key="1">
    <citation type="journal article" date="1998" name="Mol. Cell. Endocrinol.">
        <title>Identification of a second stanniocalcin cDNA in mouse and human: stanniocalcin 2.</title>
        <authorList>
            <person name="Chang A.C.-M."/>
            <person name="Reddel R.R."/>
        </authorList>
    </citation>
    <scope>NUCLEOTIDE SEQUENCE [MRNA]</scope>
</reference>
<reference key="2">
    <citation type="journal article" date="1999" name="Horm. Metab. Res.">
        <title>Stanniocalcin 2: characterization of the protein and its localization to human pancreatic alpha cells.</title>
        <authorList>
            <person name="Moore E.E."/>
            <person name="Kuestner R.E."/>
            <person name="Conklin D.C."/>
            <person name="Whitmore T.E."/>
            <person name="Downey W."/>
            <person name="Buddle M.M."/>
            <person name="Adams R.L."/>
            <person name="Bell L.A."/>
            <person name="Thompson D.L."/>
            <person name="Wolf A."/>
            <person name="Chen L."/>
            <person name="Stamm M.R."/>
            <person name="Grant F.J."/>
            <person name="Lok S."/>
            <person name="Ren H."/>
            <person name="de Jongh K.S."/>
        </authorList>
    </citation>
    <scope>NUCLEOTIDE SEQUENCE [MRNA]</scope>
    <scope>CHARACTERIZATION</scope>
    <source>
        <tissue>Mammary carcinoma</tissue>
    </source>
</reference>
<reference key="3">
    <citation type="journal article" date="2004" name="Genome Res.">
        <title>The status, quality, and expansion of the NIH full-length cDNA project: the Mammalian Gene Collection (MGC).</title>
        <authorList>
            <consortium name="The MGC Project Team"/>
        </authorList>
    </citation>
    <scope>NUCLEOTIDE SEQUENCE [LARGE SCALE MRNA]</scope>
    <source>
        <tissue>Mammary tumor</tissue>
    </source>
</reference>
<keyword id="KW-1015">Disulfide bond</keyword>
<keyword id="KW-0325">Glycoprotein</keyword>
<keyword id="KW-0372">Hormone</keyword>
<keyword id="KW-1185">Reference proteome</keyword>
<keyword id="KW-0964">Secreted</keyword>
<keyword id="KW-0732">Signal</keyword>
<accession>O88452</accession>
<comment type="function">
    <text>Has an anti-hypocalcemic action on calcium and phosphate homeostasis.</text>
</comment>
<comment type="subunit">
    <text evidence="1">Homodimer; disulfide-linked.</text>
</comment>
<comment type="subcellular location">
    <subcellularLocation>
        <location evidence="4">Secreted</location>
    </subcellularLocation>
</comment>
<comment type="tissue specificity">
    <text>Found in a variety of tissues including skeletal muscle, small intestine, kidney, liver and brain.</text>
</comment>
<comment type="similarity">
    <text evidence="4">Belongs to the stanniocalcin family.</text>
</comment>
<dbReference type="EMBL" id="AF056244">
    <property type="protein sequence ID" value="AAC27507.1"/>
    <property type="molecule type" value="mRNA"/>
</dbReference>
<dbReference type="EMBL" id="AF031035">
    <property type="protein sequence ID" value="AAD01921.1"/>
    <property type="molecule type" value="mRNA"/>
</dbReference>
<dbReference type="EMBL" id="BC012206">
    <property type="protein sequence ID" value="AAH12206.1"/>
    <property type="molecule type" value="mRNA"/>
</dbReference>
<dbReference type="CCDS" id="CCDS24512.1"/>
<dbReference type="RefSeq" id="NP_035621.1">
    <property type="nucleotide sequence ID" value="NM_011491.3"/>
</dbReference>
<dbReference type="SMR" id="O88452"/>
<dbReference type="FunCoup" id="O88452">
    <property type="interactions" value="376"/>
</dbReference>
<dbReference type="STRING" id="10090.ENSMUSP00000020546"/>
<dbReference type="GlyCosmos" id="O88452">
    <property type="glycosylation" value="1 site, No reported glycans"/>
</dbReference>
<dbReference type="GlyGen" id="O88452">
    <property type="glycosylation" value="1 site"/>
</dbReference>
<dbReference type="PhosphoSitePlus" id="O88452"/>
<dbReference type="jPOST" id="O88452"/>
<dbReference type="PaxDb" id="10090-ENSMUSP00000020546"/>
<dbReference type="PeptideAtlas" id="O88452"/>
<dbReference type="ProteomicsDB" id="258662"/>
<dbReference type="Antibodypedia" id="28957">
    <property type="antibodies" value="411 antibodies from 34 providers"/>
</dbReference>
<dbReference type="DNASU" id="20856"/>
<dbReference type="Ensembl" id="ENSMUST00000020546.3">
    <property type="protein sequence ID" value="ENSMUSP00000020546.3"/>
    <property type="gene ID" value="ENSMUSG00000020303.3"/>
</dbReference>
<dbReference type="GeneID" id="20856"/>
<dbReference type="KEGG" id="mmu:20856"/>
<dbReference type="UCSC" id="uc007iik.1">
    <property type="organism name" value="mouse"/>
</dbReference>
<dbReference type="AGR" id="MGI:1316731"/>
<dbReference type="CTD" id="8614"/>
<dbReference type="MGI" id="MGI:1316731">
    <property type="gene designation" value="Stc2"/>
</dbReference>
<dbReference type="VEuPathDB" id="HostDB:ENSMUSG00000020303"/>
<dbReference type="eggNOG" id="ENOG502QU7E">
    <property type="taxonomic scope" value="Eukaryota"/>
</dbReference>
<dbReference type="GeneTree" id="ENSGT00390000005989"/>
<dbReference type="HOGENOM" id="CLU_064102_0_0_1"/>
<dbReference type="InParanoid" id="O88452"/>
<dbReference type="OMA" id="HNSKATH"/>
<dbReference type="OrthoDB" id="8931566at2759"/>
<dbReference type="PhylomeDB" id="O88452"/>
<dbReference type="TreeFam" id="TF324693"/>
<dbReference type="Reactome" id="R-MMU-381426">
    <property type="pathway name" value="Regulation of Insulin-like Growth Factor (IGF) transport and uptake by Insulin-like Growth Factor Binding Proteins (IGFBPs)"/>
</dbReference>
<dbReference type="Reactome" id="R-MMU-8957275">
    <property type="pathway name" value="Post-translational protein phosphorylation"/>
</dbReference>
<dbReference type="BioGRID-ORCS" id="20856">
    <property type="hits" value="0 hits in 79 CRISPR screens"/>
</dbReference>
<dbReference type="PRO" id="PR:O88452"/>
<dbReference type="Proteomes" id="UP000000589">
    <property type="component" value="Chromosome 11"/>
</dbReference>
<dbReference type="RNAct" id="O88452">
    <property type="molecule type" value="protein"/>
</dbReference>
<dbReference type="Bgee" id="ENSMUSG00000020303">
    <property type="expression patterns" value="Expressed in aortic valve and 176 other cell types or tissues"/>
</dbReference>
<dbReference type="ExpressionAtlas" id="O88452">
    <property type="expression patterns" value="baseline and differential"/>
</dbReference>
<dbReference type="GO" id="GO:0005783">
    <property type="term" value="C:endoplasmic reticulum"/>
    <property type="evidence" value="ECO:0000314"/>
    <property type="project" value="MGI"/>
</dbReference>
<dbReference type="GO" id="GO:0005576">
    <property type="term" value="C:extracellular region"/>
    <property type="evidence" value="ECO:0000266"/>
    <property type="project" value="MGI"/>
</dbReference>
<dbReference type="GO" id="GO:0005794">
    <property type="term" value="C:Golgi apparatus"/>
    <property type="evidence" value="ECO:0000314"/>
    <property type="project" value="MGI"/>
</dbReference>
<dbReference type="GO" id="GO:0048471">
    <property type="term" value="C:perinuclear region of cytoplasm"/>
    <property type="evidence" value="ECO:0007669"/>
    <property type="project" value="Ensembl"/>
</dbReference>
<dbReference type="GO" id="GO:0019899">
    <property type="term" value="F:enzyme binding"/>
    <property type="evidence" value="ECO:0007669"/>
    <property type="project" value="Ensembl"/>
</dbReference>
<dbReference type="GO" id="GO:0020037">
    <property type="term" value="F:heme binding"/>
    <property type="evidence" value="ECO:0007669"/>
    <property type="project" value="Ensembl"/>
</dbReference>
<dbReference type="GO" id="GO:0005179">
    <property type="term" value="F:hormone activity"/>
    <property type="evidence" value="ECO:0007669"/>
    <property type="project" value="UniProtKB-KW"/>
</dbReference>
<dbReference type="GO" id="GO:0042803">
    <property type="term" value="F:protein homodimerization activity"/>
    <property type="evidence" value="ECO:0007669"/>
    <property type="project" value="Ensembl"/>
</dbReference>
<dbReference type="GO" id="GO:0055074">
    <property type="term" value="P:calcium ion homeostasis"/>
    <property type="evidence" value="ECO:0000316"/>
    <property type="project" value="MGI"/>
</dbReference>
<dbReference type="GO" id="GO:0071456">
    <property type="term" value="P:cellular response to hypoxia"/>
    <property type="evidence" value="ECO:0007669"/>
    <property type="project" value="Ensembl"/>
</dbReference>
<dbReference type="GO" id="GO:0046697">
    <property type="term" value="P:decidualization"/>
    <property type="evidence" value="ECO:0007669"/>
    <property type="project" value="Ensembl"/>
</dbReference>
<dbReference type="GO" id="GO:0007566">
    <property type="term" value="P:embryo implantation"/>
    <property type="evidence" value="ECO:0007669"/>
    <property type="project" value="Ensembl"/>
</dbReference>
<dbReference type="GO" id="GO:0030968">
    <property type="term" value="P:endoplasmic reticulum unfolded protein response"/>
    <property type="evidence" value="ECO:0000315"/>
    <property type="project" value="MGI"/>
</dbReference>
<dbReference type="GO" id="GO:0006874">
    <property type="term" value="P:intracellular calcium ion homeostasis"/>
    <property type="evidence" value="ECO:0000315"/>
    <property type="project" value="MGI"/>
</dbReference>
<dbReference type="GO" id="GO:0010629">
    <property type="term" value="P:negative regulation of gene expression"/>
    <property type="evidence" value="ECO:0007669"/>
    <property type="project" value="Ensembl"/>
</dbReference>
<dbReference type="GO" id="GO:0040015">
    <property type="term" value="P:negative regulation of multicellular organism growth"/>
    <property type="evidence" value="ECO:0000315"/>
    <property type="project" value="MGI"/>
</dbReference>
<dbReference type="GO" id="GO:0046885">
    <property type="term" value="P:regulation of hormone biosynthetic process"/>
    <property type="evidence" value="ECO:0007669"/>
    <property type="project" value="Ensembl"/>
</dbReference>
<dbReference type="GO" id="GO:2000118">
    <property type="term" value="P:regulation of sodium-dependent phosphate transport"/>
    <property type="evidence" value="ECO:0000266"/>
    <property type="project" value="MGI"/>
</dbReference>
<dbReference type="GO" id="GO:2001256">
    <property type="term" value="P:regulation of store-operated calcium entry"/>
    <property type="evidence" value="ECO:0000315"/>
    <property type="project" value="MGI"/>
</dbReference>
<dbReference type="GO" id="GO:0034976">
    <property type="term" value="P:response to endoplasmic reticulum stress"/>
    <property type="evidence" value="ECO:0000315"/>
    <property type="project" value="MGI"/>
</dbReference>
<dbReference type="GO" id="GO:0006979">
    <property type="term" value="P:response to oxidative stress"/>
    <property type="evidence" value="ECO:0000315"/>
    <property type="project" value="MGI"/>
</dbReference>
<dbReference type="GO" id="GO:0043434">
    <property type="term" value="P:response to peptide hormone"/>
    <property type="evidence" value="ECO:0007669"/>
    <property type="project" value="Ensembl"/>
</dbReference>
<dbReference type="GO" id="GO:0033280">
    <property type="term" value="P:response to vitamin D"/>
    <property type="evidence" value="ECO:0007669"/>
    <property type="project" value="Ensembl"/>
</dbReference>
<dbReference type="InterPro" id="IPR004978">
    <property type="entry name" value="Stanniocalcin"/>
</dbReference>
<dbReference type="PANTHER" id="PTHR11245">
    <property type="entry name" value="STANNIOCALCIN"/>
    <property type="match status" value="1"/>
</dbReference>
<dbReference type="PANTHER" id="PTHR11245:SF2">
    <property type="entry name" value="STANNIOCALCIN-2"/>
    <property type="match status" value="1"/>
</dbReference>
<dbReference type="Pfam" id="PF03298">
    <property type="entry name" value="Stanniocalcin"/>
    <property type="match status" value="1"/>
</dbReference>
<organism>
    <name type="scientific">Mus musculus</name>
    <name type="common">Mouse</name>
    <dbReference type="NCBI Taxonomy" id="10090"/>
    <lineage>
        <taxon>Eukaryota</taxon>
        <taxon>Metazoa</taxon>
        <taxon>Chordata</taxon>
        <taxon>Craniata</taxon>
        <taxon>Vertebrata</taxon>
        <taxon>Euteleostomi</taxon>
        <taxon>Mammalia</taxon>
        <taxon>Eutheria</taxon>
        <taxon>Euarchontoglires</taxon>
        <taxon>Glires</taxon>
        <taxon>Rodentia</taxon>
        <taxon>Myomorpha</taxon>
        <taxon>Muroidea</taxon>
        <taxon>Muridae</taxon>
        <taxon>Murinae</taxon>
        <taxon>Mus</taxon>
        <taxon>Mus</taxon>
    </lineage>
</organism>
<proteinExistence type="evidence at protein level"/>
<name>STC2_MOUSE</name>
<gene>
    <name type="primary">Stc2</name>
</gene>
<sequence>MCAERLGQFVTLALVFATLDPAQGTDSTNPPEGPQDRSSQQKGRLSLQNTAEIQHCLVNAGDVGCGVFECFENNSCEIQGLHGICMTFLHNAGKFDAQGKSFIKDALRCKAHALRHKFGCISRKCPAIREMVFQLQRECYLKHDLCSAAQENVGVIVEMIHFKDLLLHEPYVDLVNLLLTCGEDVKEAVTRSVQAQCEQSWGGLCSILSFCTSNIQRPPTAAPEHQPLADRAQLSRPHHRDTDHHLTANRGAKGERGSKSHPNAHARGRTGGQSAQGPSGSSEWEDEQSEYSDIRR</sequence>
<evidence type="ECO:0000250" key="1"/>
<evidence type="ECO:0000255" key="2"/>
<evidence type="ECO:0000256" key="3">
    <source>
        <dbReference type="SAM" id="MobiDB-lite"/>
    </source>
</evidence>
<evidence type="ECO:0000305" key="4"/>
<protein>
    <recommendedName>
        <fullName>Stanniocalcin-2</fullName>
        <shortName>STC-2</shortName>
    </recommendedName>
</protein>